<proteinExistence type="evidence at protein level"/>
<name>BET1_HUMAN</name>
<protein>
    <recommendedName>
        <fullName>BET1 homolog</fullName>
        <shortName>hBET1</shortName>
    </recommendedName>
    <alternativeName>
        <fullName>Golgi vesicular membrane-trafficking protein p18</fullName>
    </alternativeName>
</protein>
<accession>O15155</accession>
<accession>Q96EA0</accession>
<dbReference type="EMBL" id="AF007551">
    <property type="protein sequence ID" value="AAB62941.1"/>
    <property type="molecule type" value="mRNA"/>
</dbReference>
<dbReference type="EMBL" id="AC006378">
    <property type="protein sequence ID" value="AAD47132.1"/>
    <property type="molecule type" value="Genomic_DNA"/>
</dbReference>
<dbReference type="EMBL" id="CH471091">
    <property type="protein sequence ID" value="EAW76802.1"/>
    <property type="molecule type" value="Genomic_DNA"/>
</dbReference>
<dbReference type="EMBL" id="BC000899">
    <property type="protein sequence ID" value="AAH00899.1"/>
    <property type="molecule type" value="mRNA"/>
</dbReference>
<dbReference type="EMBL" id="BC012595">
    <property type="protein sequence ID" value="AAH12595.1"/>
    <property type="molecule type" value="mRNA"/>
</dbReference>
<dbReference type="CCDS" id="CCDS5635.1">
    <molecule id="O15155-1"/>
</dbReference>
<dbReference type="CCDS" id="CCDS83203.1">
    <molecule id="O15155-2"/>
</dbReference>
<dbReference type="RefSeq" id="NP_001304668.1">
    <molecule id="O15155-2"/>
    <property type="nucleotide sequence ID" value="NM_001317739.2"/>
</dbReference>
<dbReference type="RefSeq" id="NP_005859.1">
    <molecule id="O15155-1"/>
    <property type="nucleotide sequence ID" value="NM_005868.6"/>
</dbReference>
<dbReference type="PDB" id="3EGX">
    <property type="method" value="X-ray"/>
    <property type="resolution" value="3.30 A"/>
    <property type="chains" value="D=24-32"/>
</dbReference>
<dbReference type="PDBsum" id="3EGX"/>
<dbReference type="SMR" id="O15155"/>
<dbReference type="BioGRID" id="115571">
    <property type="interactions" value="405"/>
</dbReference>
<dbReference type="FunCoup" id="O15155">
    <property type="interactions" value="2264"/>
</dbReference>
<dbReference type="IntAct" id="O15155">
    <property type="interactions" value="358"/>
</dbReference>
<dbReference type="MINT" id="O15155"/>
<dbReference type="STRING" id="9606.ENSP00000222547"/>
<dbReference type="GlyGen" id="O15155">
    <property type="glycosylation" value="1 site, 1 O-linked glycan (1 site)"/>
</dbReference>
<dbReference type="iPTMnet" id="O15155"/>
<dbReference type="MetOSite" id="O15155"/>
<dbReference type="PhosphoSitePlus" id="O15155"/>
<dbReference type="SwissPalm" id="O15155"/>
<dbReference type="BioMuta" id="BET1"/>
<dbReference type="jPOST" id="O15155"/>
<dbReference type="MassIVE" id="O15155"/>
<dbReference type="PaxDb" id="9606-ENSP00000222547"/>
<dbReference type="PeptideAtlas" id="O15155"/>
<dbReference type="ProteomicsDB" id="48479">
    <molecule id="O15155-1"/>
</dbReference>
<dbReference type="ProteomicsDB" id="76387"/>
<dbReference type="Pumba" id="O15155"/>
<dbReference type="TopDownProteomics" id="O15155-1">
    <molecule id="O15155-1"/>
</dbReference>
<dbReference type="Antibodypedia" id="64131">
    <property type="antibodies" value="42 antibodies from 13 providers"/>
</dbReference>
<dbReference type="DNASU" id="10282"/>
<dbReference type="Ensembl" id="ENST00000222547.8">
    <molecule id="O15155-1"/>
    <property type="protein sequence ID" value="ENSP00000222547.3"/>
    <property type="gene ID" value="ENSG00000105829.13"/>
</dbReference>
<dbReference type="Ensembl" id="ENST00000433727.5">
    <molecule id="O15155-2"/>
    <property type="protein sequence ID" value="ENSP00000391228.1"/>
    <property type="gene ID" value="ENSG00000105829.13"/>
</dbReference>
<dbReference type="GeneID" id="10282"/>
<dbReference type="KEGG" id="hsa:10282"/>
<dbReference type="MANE-Select" id="ENST00000222547.8">
    <property type="protein sequence ID" value="ENSP00000222547.3"/>
    <property type="RefSeq nucleotide sequence ID" value="NM_005868.6"/>
    <property type="RefSeq protein sequence ID" value="NP_005859.1"/>
</dbReference>
<dbReference type="UCSC" id="uc064fkr.1">
    <molecule id="O15155-1"/>
    <property type="organism name" value="human"/>
</dbReference>
<dbReference type="AGR" id="HGNC:14562"/>
<dbReference type="CTD" id="10282"/>
<dbReference type="DisGeNET" id="10282"/>
<dbReference type="GeneCards" id="BET1"/>
<dbReference type="HGNC" id="HGNC:14562">
    <property type="gene designation" value="BET1"/>
</dbReference>
<dbReference type="HPA" id="ENSG00000105829">
    <property type="expression patterns" value="Low tissue specificity"/>
</dbReference>
<dbReference type="MalaCards" id="BET1"/>
<dbReference type="MIM" id="254100">
    <property type="type" value="phenotype"/>
</dbReference>
<dbReference type="MIM" id="605456">
    <property type="type" value="gene"/>
</dbReference>
<dbReference type="neXtProt" id="NX_O15155"/>
<dbReference type="OpenTargets" id="ENSG00000105829"/>
<dbReference type="PharmGKB" id="PA25338"/>
<dbReference type="VEuPathDB" id="HostDB:ENSG00000105829"/>
<dbReference type="eggNOG" id="KOG3385">
    <property type="taxonomic scope" value="Eukaryota"/>
</dbReference>
<dbReference type="GeneTree" id="ENSGT00940000162637"/>
<dbReference type="HOGENOM" id="CLU_086133_2_1_1"/>
<dbReference type="InParanoid" id="O15155"/>
<dbReference type="OMA" id="KMDSARG"/>
<dbReference type="OrthoDB" id="261831at2759"/>
<dbReference type="PAN-GO" id="O15155">
    <property type="GO annotations" value="5 GO annotations based on evolutionary models"/>
</dbReference>
<dbReference type="PhylomeDB" id="O15155"/>
<dbReference type="TreeFam" id="TF323307"/>
<dbReference type="PathwayCommons" id="O15155"/>
<dbReference type="Reactome" id="R-HSA-204005">
    <property type="pathway name" value="COPII-mediated vesicle transport"/>
</dbReference>
<dbReference type="Reactome" id="R-HSA-6807878">
    <property type="pathway name" value="COPI-mediated anterograde transport"/>
</dbReference>
<dbReference type="SignaLink" id="O15155"/>
<dbReference type="BioGRID-ORCS" id="10282">
    <property type="hits" value="321 hits in 1094 CRISPR screens"/>
</dbReference>
<dbReference type="ChiTaRS" id="BET1">
    <property type="organism name" value="human"/>
</dbReference>
<dbReference type="EvolutionaryTrace" id="O15155"/>
<dbReference type="GeneWiki" id="BET1"/>
<dbReference type="GenomeRNAi" id="10282"/>
<dbReference type="Pharos" id="O15155">
    <property type="development level" value="Tdark"/>
</dbReference>
<dbReference type="PRO" id="PR:O15155"/>
<dbReference type="Proteomes" id="UP000005640">
    <property type="component" value="Chromosome 7"/>
</dbReference>
<dbReference type="RNAct" id="O15155">
    <property type="molecule type" value="protein"/>
</dbReference>
<dbReference type="Bgee" id="ENSG00000105829">
    <property type="expression patterns" value="Expressed in body of pancreas and 200 other cell types or tissues"/>
</dbReference>
<dbReference type="ExpressionAtlas" id="O15155">
    <property type="expression patterns" value="baseline and differential"/>
</dbReference>
<dbReference type="GO" id="GO:0005801">
    <property type="term" value="C:cis-Golgi network"/>
    <property type="evidence" value="ECO:0000314"/>
    <property type="project" value="UniProtKB"/>
</dbReference>
<dbReference type="GO" id="GO:0005783">
    <property type="term" value="C:endoplasmic reticulum"/>
    <property type="evidence" value="ECO:0000314"/>
    <property type="project" value="UniProtKB"/>
</dbReference>
<dbReference type="GO" id="GO:0005789">
    <property type="term" value="C:endoplasmic reticulum membrane"/>
    <property type="evidence" value="ECO:0007669"/>
    <property type="project" value="UniProtKB-SubCell"/>
</dbReference>
<dbReference type="GO" id="GO:0033116">
    <property type="term" value="C:endoplasmic reticulum-Golgi intermediate compartment membrane"/>
    <property type="evidence" value="ECO:0000304"/>
    <property type="project" value="Reactome"/>
</dbReference>
<dbReference type="GO" id="GO:0000139">
    <property type="term" value="C:Golgi membrane"/>
    <property type="evidence" value="ECO:0000304"/>
    <property type="project" value="Reactome"/>
</dbReference>
<dbReference type="GO" id="GO:0016020">
    <property type="term" value="C:membrane"/>
    <property type="evidence" value="ECO:0007005"/>
    <property type="project" value="UniProtKB"/>
</dbReference>
<dbReference type="GO" id="GO:0031201">
    <property type="term" value="C:SNARE complex"/>
    <property type="evidence" value="ECO:0000318"/>
    <property type="project" value="GO_Central"/>
</dbReference>
<dbReference type="GO" id="GO:0030133">
    <property type="term" value="C:transport vesicle"/>
    <property type="evidence" value="ECO:0000304"/>
    <property type="project" value="Reactome"/>
</dbReference>
<dbReference type="GO" id="GO:0005484">
    <property type="term" value="F:SNAP receptor activity"/>
    <property type="evidence" value="ECO:0000318"/>
    <property type="project" value="GO_Central"/>
</dbReference>
<dbReference type="GO" id="GO:0006888">
    <property type="term" value="P:endoplasmic reticulum to Golgi vesicle-mediated transport"/>
    <property type="evidence" value="ECO:0000315"/>
    <property type="project" value="UniProtKB"/>
</dbReference>
<dbReference type="GO" id="GO:0015031">
    <property type="term" value="P:protein transport"/>
    <property type="evidence" value="ECO:0007669"/>
    <property type="project" value="UniProtKB-KW"/>
</dbReference>
<dbReference type="GO" id="GO:0048280">
    <property type="term" value="P:vesicle fusion with Golgi apparatus"/>
    <property type="evidence" value="ECO:0000318"/>
    <property type="project" value="GO_Central"/>
</dbReference>
<dbReference type="CDD" id="cd15853">
    <property type="entry name" value="SNARE_Bet1"/>
    <property type="match status" value="1"/>
</dbReference>
<dbReference type="FunFam" id="1.20.5.110:FF:000026">
    <property type="entry name" value="BET1 homolog"/>
    <property type="match status" value="1"/>
</dbReference>
<dbReference type="Gene3D" id="1.20.5.110">
    <property type="match status" value="1"/>
</dbReference>
<dbReference type="InterPro" id="IPR039899">
    <property type="entry name" value="BET1_SNARE"/>
</dbReference>
<dbReference type="InterPro" id="IPR000727">
    <property type="entry name" value="T_SNARE_dom"/>
</dbReference>
<dbReference type="PANTHER" id="PTHR12791">
    <property type="entry name" value="GOLGI SNARE BET1-RELATED"/>
    <property type="match status" value="1"/>
</dbReference>
<dbReference type="SMART" id="SM00397">
    <property type="entry name" value="t_SNARE"/>
    <property type="match status" value="1"/>
</dbReference>
<dbReference type="SUPFAM" id="SSF58038">
    <property type="entry name" value="SNARE fusion complex"/>
    <property type="match status" value="1"/>
</dbReference>
<dbReference type="PROSITE" id="PS50192">
    <property type="entry name" value="T_SNARE"/>
    <property type="match status" value="1"/>
</dbReference>
<evidence type="ECO:0000250" key="1"/>
<evidence type="ECO:0000250" key="2">
    <source>
        <dbReference type="UniProtKB" id="Q62896"/>
    </source>
</evidence>
<evidence type="ECO:0000255" key="3"/>
<evidence type="ECO:0000255" key="4">
    <source>
        <dbReference type="PROSITE-ProRule" id="PRU00202"/>
    </source>
</evidence>
<evidence type="ECO:0000269" key="5">
    <source>
    </source>
</evidence>
<evidence type="ECO:0000303" key="6">
    <source>
    </source>
</evidence>
<evidence type="ECO:0000305" key="7"/>
<evidence type="ECO:0007744" key="8">
    <source>
    </source>
</evidence>
<evidence type="ECO:0007744" key="9">
    <source>
    </source>
</evidence>
<evidence type="ECO:0007744" key="10">
    <source>
    </source>
</evidence>
<evidence type="ECO:0007744" key="11">
    <source>
    </source>
</evidence>
<evidence type="ECO:0007744" key="12">
    <source>
    </source>
</evidence>
<feature type="chain" id="PRO_0000206884" description="BET1 homolog">
    <location>
        <begin position="1"/>
        <end position="118"/>
    </location>
</feature>
<feature type="topological domain" description="Cytoplasmic" evidence="3">
    <location>
        <begin position="1"/>
        <end position="94"/>
    </location>
</feature>
<feature type="transmembrane region" description="Helical; Anchor for type IV membrane protein" evidence="3">
    <location>
        <begin position="95"/>
        <end position="115"/>
    </location>
</feature>
<feature type="topological domain" description="Vesicular" evidence="3">
    <location>
        <begin position="116"/>
        <end position="118"/>
    </location>
</feature>
<feature type="domain" description="t-SNARE coiled-coil homology" evidence="4">
    <location>
        <begin position="26"/>
        <end position="88"/>
    </location>
</feature>
<feature type="modified residue" description="Phosphoserine" evidence="8 9 10 11 12">
    <location>
        <position position="50"/>
    </location>
</feature>
<feature type="splice variant" id="VSP_056216" description="In isoform 2." evidence="6">
    <original>KTMGKLKILSRGSQTKLLCYMMLFSLFVFFIIYWIIKLR</original>
    <variation>LCPM</variation>
    <location>
        <begin position="80"/>
        <end position="118"/>
    </location>
</feature>
<feature type="sequence variant" id="VAR_089298" description="In MDRP; uncertain significance; no effect on protein level; decreased localization to the cis-Golgi; loss of interaction with LMAN1; does not affect interaction with SNARE complex members GOSR2, SEC22B and STX5; dbSNP:rs372513869." evidence="5">
    <original>I</original>
    <variation>S</variation>
    <location>
        <position position="51"/>
    </location>
</feature>
<feature type="sequence variant" id="VAR_089299" description="In MDRP; uncertain significance; this variant also affects splicing, leading to the production of 3 different splicing forms, a normally spliced transcript containing the missense, a transcript showing exon 4 skipping and a transcript showing a 34 nucleotide deletion due to the activation of a downstream cryptic splice acceptor site; strong decrease in protein expression levels; does not affect interaction with SNARE complex members GOSR2, SEC22B and STX5, nor with LMAN1; dbSNP:rs1562806584." evidence="5">
    <original>D</original>
    <variation>H</variation>
    <location>
        <position position="68"/>
    </location>
</feature>
<comment type="function">
    <text evidence="2 5">Required for vesicular transport from the ER to the Golgi complex (PubMed:34779586). Functions as a SNARE involved in the docking process of ER-derived vesicles with the cis-Golgi membrane (By similarity).</text>
</comment>
<comment type="subunit">
    <text evidence="2 5">Interacts with SNARE complex members GOSR2, SEC22B and STX5 (PubMed:34779586). Interacts with LMAN1/ERGIC53 (PubMed:34779586). Interacts with STX17 (By similarity).</text>
</comment>
<comment type="interaction">
    <interactant intactId="EBI-749204">
        <id>O15155</id>
    </interactant>
    <interactant intactId="EBI-2902702">
        <id>P29274</id>
        <label>ADORA2A</label>
    </interactant>
    <organismsDiffer>false</organismsDiffer>
    <experiments>3</experiments>
</comment>
<comment type="interaction">
    <interactant intactId="EBI-749204">
        <id>O15155</id>
    </interactant>
    <interactant intactId="EBI-7054139">
        <id>Q68DC2</id>
        <label>ANKS6</label>
    </interactant>
    <organismsDiffer>false</organismsDiffer>
    <experiments>3</experiments>
</comment>
<comment type="interaction">
    <interactant intactId="EBI-749204">
        <id>O15155</id>
    </interactant>
    <interactant intactId="EBI-13059134">
        <id>Q13520</id>
        <label>AQP6</label>
    </interactant>
    <organismsDiffer>false</organismsDiffer>
    <experiments>3</experiments>
</comment>
<comment type="interaction">
    <interactant intactId="EBI-749204">
        <id>O15155</id>
    </interactant>
    <interactant intactId="EBI-12808270">
        <id>P07307-3</id>
        <label>ASGR2</label>
    </interactant>
    <organismsDiffer>false</organismsDiffer>
    <experiments>3</experiments>
</comment>
<comment type="interaction">
    <interactant intactId="EBI-749204">
        <id>O15155</id>
    </interactant>
    <interactant intactId="EBI-12239061">
        <id>Q8WWH4</id>
        <label>ASZ1</label>
    </interactant>
    <organismsDiffer>false</organismsDiffer>
    <experiments>3</experiments>
</comment>
<comment type="interaction">
    <interactant intactId="EBI-749204">
        <id>O15155</id>
    </interactant>
    <interactant intactId="EBI-12222807">
        <id>P04233-2</id>
        <label>CD74</label>
    </interactant>
    <organismsDiffer>false</organismsDiffer>
    <experiments>3</experiments>
</comment>
<comment type="interaction">
    <interactant intactId="EBI-749204">
        <id>O15155</id>
    </interactant>
    <interactant intactId="EBI-7797864">
        <id>P11912</id>
        <label>CD79A</label>
    </interactant>
    <organismsDiffer>false</organismsDiffer>
    <experiments>3</experiments>
</comment>
<comment type="interaction">
    <interactant intactId="EBI-749204">
        <id>O15155</id>
    </interactant>
    <interactant intactId="EBI-2130213">
        <id>Q99675</id>
        <label>CGRRF1</label>
    </interactant>
    <organismsDiffer>false</organismsDiffer>
    <experiments>3</experiments>
</comment>
<comment type="interaction">
    <interactant intactId="EBI-749204">
        <id>O15155</id>
    </interactant>
    <interactant intactId="EBI-1045797">
        <id>Q8N5K1</id>
        <label>CISD2</label>
    </interactant>
    <organismsDiffer>false</organismsDiffer>
    <experiments>3</experiments>
</comment>
<comment type="interaction">
    <interactant intactId="EBI-749204">
        <id>O15155</id>
    </interactant>
    <interactant intactId="EBI-740744">
        <id>O95471</id>
        <label>CLDN7</label>
    </interactant>
    <organismsDiffer>false</organismsDiffer>
    <experiments>3</experiments>
</comment>
<comment type="interaction">
    <interactant intactId="EBI-749204">
        <id>O15155</id>
    </interactant>
    <interactant intactId="EBI-2873246">
        <id>Q8IUN9</id>
        <label>CLEC10A</label>
    </interactant>
    <organismsDiffer>false</organismsDiffer>
    <experiments>3</experiments>
</comment>
<comment type="interaction">
    <interactant intactId="EBI-749204">
        <id>O15155</id>
    </interactant>
    <interactant intactId="EBI-17233035">
        <id>Q9BUF7-2</id>
        <label>CRB3</label>
    </interactant>
    <organismsDiffer>false</organismsDiffer>
    <experiments>3</experiments>
</comment>
<comment type="interaction">
    <interactant intactId="EBI-749204">
        <id>O15155</id>
    </interactant>
    <interactant intactId="EBI-6942903">
        <id>Q96BA8</id>
        <label>CREB3L1</label>
    </interactant>
    <organismsDiffer>false</organismsDiffer>
    <experiments>3</experiments>
</comment>
<comment type="interaction">
    <interactant intactId="EBI-749204">
        <id>O15155</id>
    </interactant>
    <interactant intactId="EBI-8646596">
        <id>P49447</id>
        <label>CYB561</label>
    </interactant>
    <organismsDiffer>false</organismsDiffer>
    <experiments>3</experiments>
</comment>
<comment type="interaction">
    <interactant intactId="EBI-749204">
        <id>O15155</id>
    </interactant>
    <interactant intactId="EBI-2680384">
        <id>Q9BQA9</id>
        <label>CYBC1</label>
    </interactant>
    <organismsDiffer>false</organismsDiffer>
    <experiments>3</experiments>
</comment>
<comment type="interaction">
    <interactant intactId="EBI-749204">
        <id>O15155</id>
    </interactant>
    <interactant intactId="EBI-18535450">
        <id>Q9GZR5</id>
        <label>ELOVL4</label>
    </interactant>
    <organismsDiffer>false</organismsDiffer>
    <experiments>3</experiments>
</comment>
<comment type="interaction">
    <interactant intactId="EBI-749204">
        <id>O15155</id>
    </interactant>
    <interactant intactId="EBI-781551">
        <id>Q9Y282</id>
        <label>ERGIC3</label>
    </interactant>
    <organismsDiffer>false</organismsDiffer>
    <experiments>3</experiments>
</comment>
<comment type="interaction">
    <interactant intactId="EBI-749204">
        <id>O15155</id>
    </interactant>
    <interactant intactId="EBI-18636064">
        <id>Q8TBP5</id>
        <label>FAM174A</label>
    </interactant>
    <organismsDiffer>false</organismsDiffer>
    <experiments>3</experiments>
</comment>
<comment type="interaction">
    <interactant intactId="EBI-749204">
        <id>O15155</id>
    </interactant>
    <interactant intactId="EBI-18304435">
        <id>Q5JX71</id>
        <label>FAM209A</label>
    </interactant>
    <organismsDiffer>false</organismsDiffer>
    <experiments>3</experiments>
</comment>
<comment type="interaction">
    <interactant intactId="EBI-749204">
        <id>O15155</id>
    </interactant>
    <interactant intactId="EBI-18938272">
        <id>Q96KR6</id>
        <label>FAM210B</label>
    </interactant>
    <organismsDiffer>false</organismsDiffer>
    <experiments>3</experiments>
</comment>
<comment type="interaction">
    <interactant intactId="EBI-749204">
        <id>O15155</id>
    </interactant>
    <interactant intactId="EBI-4401517">
        <id>O14653</id>
        <label>GOSR2</label>
    </interactant>
    <organismsDiffer>false</organismsDiffer>
    <experiments>8</experiments>
</comment>
<comment type="interaction">
    <interactant intactId="EBI-749204">
        <id>O15155</id>
    </interactant>
    <interactant intactId="EBI-13345167">
        <id>Q8TDT2</id>
        <label>GPR152</label>
    </interactant>
    <organismsDiffer>false</organismsDiffer>
    <experiments>3</experiments>
</comment>
<comment type="interaction">
    <interactant intactId="EBI-749204">
        <id>O15155</id>
    </interactant>
    <interactant intactId="EBI-11721746">
        <id>Q8TED1</id>
        <label>GPX8</label>
    </interactant>
    <organismsDiffer>false</organismsDiffer>
    <experiments>3</experiments>
</comment>
<comment type="interaction">
    <interactant intactId="EBI-749204">
        <id>O15155</id>
    </interactant>
    <interactant intactId="EBI-10266796">
        <id>Q8N5M9</id>
        <label>JAGN1</label>
    </interactant>
    <organismsDiffer>false</organismsDiffer>
    <experiments>3</experiments>
</comment>
<comment type="interaction">
    <interactant intactId="EBI-749204">
        <id>O15155</id>
    </interactant>
    <interactant intactId="EBI-749265">
        <id>Q8N6L0</id>
        <label>KASH5</label>
    </interactant>
    <organismsDiffer>false</organismsDiffer>
    <experiments>3</experiments>
</comment>
<comment type="interaction">
    <interactant intactId="EBI-749204">
        <id>O15155</id>
    </interactant>
    <interactant intactId="EBI-12017638">
        <id>P48051</id>
        <label>KCNJ6</label>
    </interactant>
    <organismsDiffer>false</organismsDiffer>
    <experiments>3</experiments>
</comment>
<comment type="interaction">
    <interactant intactId="EBI-749204">
        <id>O15155</id>
    </interactant>
    <interactant intactId="EBI-17200970">
        <id>Q6UWN5</id>
        <label>LYPD5</label>
    </interactant>
    <organismsDiffer>false</organismsDiffer>
    <experiments>3</experiments>
</comment>
<comment type="interaction">
    <interactant intactId="EBI-749204">
        <id>O15155</id>
    </interactant>
    <interactant intactId="EBI-1045155">
        <id>P43360</id>
        <label>MAGEA6</label>
    </interactant>
    <organismsDiffer>false</organismsDiffer>
    <experiments>3</experiments>
</comment>
<comment type="interaction">
    <interactant intactId="EBI-749204">
        <id>O15155</id>
    </interactant>
    <interactant intactId="EBI-11956541">
        <id>Q9GZY8-5</id>
        <label>MFF</label>
    </interactant>
    <organismsDiffer>false</organismsDiffer>
    <experiments>3</experiments>
</comment>
<comment type="interaction">
    <interactant intactId="EBI-749204">
        <id>O15155</id>
    </interactant>
    <interactant intactId="EBI-724754">
        <id>O14880</id>
        <label>MGST3</label>
    </interactant>
    <organismsDiffer>false</organismsDiffer>
    <experiments>3</experiments>
</comment>
<comment type="interaction">
    <interactant intactId="EBI-749204">
        <id>O15155</id>
    </interactant>
    <interactant intactId="EBI-3921185">
        <id>Q9H115</id>
        <label>NAPB</label>
    </interactant>
    <organismsDiffer>false</organismsDiffer>
    <experiments>3</experiments>
</comment>
<comment type="interaction">
    <interactant intactId="EBI-749204">
        <id>O15155</id>
    </interactant>
    <interactant intactId="EBI-11161398">
        <id>O14684</id>
        <label>PTGES</label>
    </interactant>
    <organismsDiffer>false</organismsDiffer>
    <experiments>3</experiments>
</comment>
<comment type="interaction">
    <interactant intactId="EBI-749204">
        <id>O15155</id>
    </interactant>
    <interactant intactId="EBI-7545592">
        <id>Q9H6H4</id>
        <label>REEP4</label>
    </interactant>
    <organismsDiffer>false</organismsDiffer>
    <experiments>3</experiments>
</comment>
<comment type="interaction">
    <interactant intactId="EBI-749204">
        <id>O15155</id>
    </interactant>
    <interactant intactId="EBI-10192441">
        <id>Q86VR2</id>
        <label>RETREG3</label>
    </interactant>
    <organismsDiffer>false</organismsDiffer>
    <experiments>3</experiments>
</comment>
<comment type="interaction">
    <interactant intactId="EBI-749204">
        <id>O15155</id>
    </interactant>
    <interactant intactId="EBI-12814225">
        <id>Q9BXS9-3</id>
        <label>SLC26A6</label>
    </interactant>
    <organismsDiffer>false</organismsDiffer>
    <experiments>3</experiments>
</comment>
<comment type="interaction">
    <interactant intactId="EBI-749204">
        <id>O15155</id>
    </interactant>
    <interactant intactId="EBI-5235586">
        <id>Q8TBB6</id>
        <label>SLC7A14</label>
    </interactant>
    <organismsDiffer>false</organismsDiffer>
    <experiments>3</experiments>
</comment>
<comment type="interaction">
    <interactant intactId="EBI-749204">
        <id>O15155</id>
    </interactant>
    <interactant intactId="EBI-17280858">
        <id>Q8WWF3</id>
        <label>SSMEM1</label>
    </interactant>
    <organismsDiffer>false</organismsDiffer>
    <experiments>3</experiments>
</comment>
<comment type="interaction">
    <interactant intactId="EBI-749204">
        <id>O15155</id>
    </interactant>
    <interactant intactId="EBI-712466">
        <id>Q16623</id>
        <label>STX1A</label>
    </interactant>
    <organismsDiffer>false</organismsDiffer>
    <experiments>3</experiments>
</comment>
<comment type="interaction">
    <interactant intactId="EBI-749204">
        <id>O15155</id>
    </interactant>
    <interactant intactId="EBI-9071709">
        <id>P61266</id>
        <label>STX1B</label>
    </interactant>
    <organismsDiffer>false</organismsDiffer>
    <experiments>3</experiments>
</comment>
<comment type="interaction">
    <interactant intactId="EBI-749204">
        <id>O15155</id>
    </interactant>
    <interactant intactId="EBI-11956649">
        <id>P32856-2</id>
        <label>STX2</label>
    </interactant>
    <organismsDiffer>false</organismsDiffer>
    <experiments>3</experiments>
</comment>
<comment type="interaction">
    <interactant intactId="EBI-749204">
        <id>O15155</id>
    </interactant>
    <interactant intactId="EBI-744942">
        <id>Q12846</id>
        <label>STX4</label>
    </interactant>
    <organismsDiffer>false</organismsDiffer>
    <experiments>6</experiments>
</comment>
<comment type="interaction">
    <interactant intactId="EBI-749204">
        <id>O15155</id>
    </interactant>
    <interactant intactId="EBI-12821895">
        <id>Q8N6Q1</id>
        <label>TMCO5A</label>
    </interactant>
    <organismsDiffer>false</organismsDiffer>
    <experiments>3</experiments>
</comment>
<comment type="interaction">
    <interactant intactId="EBI-749204">
        <id>O15155</id>
    </interactant>
    <interactant intactId="EBI-10982110">
        <id>Q96Q45-2</id>
        <label>TMEM237</label>
    </interactant>
    <organismsDiffer>false</organismsDiffer>
    <experiments>3</experiments>
</comment>
<comment type="interaction">
    <interactant intactId="EBI-749204">
        <id>O15155</id>
    </interactant>
    <interactant intactId="EBI-11722971">
        <id>Q53FP2</id>
        <label>TMEM35A</label>
    </interactant>
    <organismsDiffer>false</organismsDiffer>
    <experiments>3</experiments>
</comment>
<comment type="interaction">
    <interactant intactId="EBI-749204">
        <id>O15155</id>
    </interactant>
    <interactant intactId="EBI-18178701">
        <id>Q4KMG9</id>
        <label>TMEM52B</label>
    </interactant>
    <organismsDiffer>false</organismsDiffer>
    <experiments>3</experiments>
</comment>
<comment type="interaction">
    <interactant intactId="EBI-749204">
        <id>O15155</id>
    </interactant>
    <interactant intactId="EBI-11742770">
        <id>Q96HE8</id>
        <label>TMEM80</label>
    </interactant>
    <organismsDiffer>false</organismsDiffer>
    <experiments>3</experiments>
</comment>
<comment type="interaction">
    <interactant intactId="EBI-749204">
        <id>O15155</id>
    </interactant>
    <interactant intactId="EBI-6447886">
        <id>Q9Y320</id>
        <label>TMX2</label>
    </interactant>
    <organismsDiffer>false</organismsDiffer>
    <experiments>3</experiments>
</comment>
<comment type="interaction">
    <interactant intactId="EBI-749204">
        <id>O15155</id>
    </interactant>
    <interactant intactId="EBI-739895">
        <id>Q8N6Y0</id>
        <label>USHBP1</label>
    </interactant>
    <organismsDiffer>false</organismsDiffer>
    <experiments>2</experiments>
</comment>
<comment type="interaction">
    <interactant intactId="EBI-25846497">
        <id>O15155-2</id>
    </interactant>
    <interactant intactId="EBI-11954292">
        <id>Q86V38</id>
        <label>ATN1</label>
    </interactant>
    <organismsDiffer>false</organismsDiffer>
    <experiments>3</experiments>
</comment>
<comment type="interaction">
    <interactant intactId="EBI-25846497">
        <id>O15155-2</id>
    </interactant>
    <interactant intactId="EBI-2432309">
        <id>Q92876</id>
        <label>KLK6</label>
    </interactant>
    <organismsDiffer>false</organismsDiffer>
    <experiments>3</experiments>
</comment>
<comment type="subcellular location">
    <subcellularLocation>
        <location evidence="5">Endoplasmic reticulum membrane</location>
        <topology evidence="1">Single-pass type IV membrane protein</topology>
    </subcellularLocation>
    <subcellularLocation>
        <location evidence="5">Golgi apparatus</location>
        <location evidence="5">cis-Golgi network membrane</location>
    </subcellularLocation>
    <subcellularLocation>
        <location evidence="1">Golgi apparatus membrane</location>
    </subcellularLocation>
    <text evidence="1">Concentrated most in the intermediate compartment/cis-Golgi network and the cis-Golgi cisternae 1 and 2. Greatly reduced in concentration at the trans end of the Golgi apparatus (By similarity).</text>
</comment>
<comment type="alternative products">
    <event type="alternative splicing"/>
    <isoform>
        <id>O15155-1</id>
        <name>1</name>
        <sequence type="displayed"/>
    </isoform>
    <isoform>
        <id>O15155-2</id>
        <name>2</name>
        <sequence type="described" ref="VSP_056216"/>
    </isoform>
</comment>
<comment type="tissue specificity">
    <text evidence="5">Expressed in muscle.</text>
</comment>
<comment type="disease" evidence="5">
    <disease id="DI-06855">
        <name>Muscular dystrophy, congenital, with rapid progression</name>
        <acronym>MDRP</acronym>
        <description>An autosomal recessive congenital disease that manifests with severely progressive muscular dystrophy, and results in death in infancy or early childhood. Clinical features include hypotonia and poor feeding, delayed motor development, progressive weakness and lethargy, and respiratory insufficiency. Some patients may have refractory epilepsy and cataracts.</description>
        <dbReference type="MIM" id="254100"/>
    </disease>
    <text>The disease may be caused by variants affecting the gene represented in this entry.</text>
</comment>
<comment type="similarity">
    <text evidence="7">Belongs to the BET1 family.</text>
</comment>
<sequence>MRRAGLGEGVPPGNYGNYGYANSGYSACEEENERLTESLRSKVTAIKSLSIEIGHEVKTQNKLLAEMDSQFDSTTGFLGKTMGKLKILSRGSQTKLLCYMMLFSLFVFFIIYWIIKLR</sequence>
<organism>
    <name type="scientific">Homo sapiens</name>
    <name type="common">Human</name>
    <dbReference type="NCBI Taxonomy" id="9606"/>
    <lineage>
        <taxon>Eukaryota</taxon>
        <taxon>Metazoa</taxon>
        <taxon>Chordata</taxon>
        <taxon>Craniata</taxon>
        <taxon>Vertebrata</taxon>
        <taxon>Euteleostomi</taxon>
        <taxon>Mammalia</taxon>
        <taxon>Eutheria</taxon>
        <taxon>Euarchontoglires</taxon>
        <taxon>Primates</taxon>
        <taxon>Haplorrhini</taxon>
        <taxon>Catarrhini</taxon>
        <taxon>Hominidae</taxon>
        <taxon>Homo</taxon>
    </lineage>
</organism>
<gene>
    <name type="primary">BET1</name>
</gene>
<reference key="1">
    <citation type="journal article" date="1997" name="J. Cell Biol.">
        <title>The mammalian protein (rbet1) homologous to yeast Bet1p is primarily associated with the pre-Golgi intermediate compartment and is involved in vesicular transport from the endoplasmic reticulum to the Golgi apparatus.</title>
        <authorList>
            <person name="Zhang T."/>
            <person name="Wong S.H."/>
            <person name="Tang B.L."/>
            <person name="Xu Y."/>
            <person name="Peter F."/>
            <person name="Subramaniam V.N."/>
            <person name="Hong W."/>
        </authorList>
    </citation>
    <scope>NUCLEOTIDE SEQUENCE [MRNA] (ISOFORM 1)</scope>
</reference>
<reference key="2">
    <citation type="journal article" date="2003" name="Nature">
        <title>The DNA sequence of human chromosome 7.</title>
        <authorList>
            <person name="Hillier L.W."/>
            <person name="Fulton R.S."/>
            <person name="Fulton L.A."/>
            <person name="Graves T.A."/>
            <person name="Pepin K.H."/>
            <person name="Wagner-McPherson C."/>
            <person name="Layman D."/>
            <person name="Maas J."/>
            <person name="Jaeger S."/>
            <person name="Walker R."/>
            <person name="Wylie K."/>
            <person name="Sekhon M."/>
            <person name="Becker M.C."/>
            <person name="O'Laughlin M.D."/>
            <person name="Schaller M.E."/>
            <person name="Fewell G.A."/>
            <person name="Delehaunty K.D."/>
            <person name="Miner T.L."/>
            <person name="Nash W.E."/>
            <person name="Cordes M."/>
            <person name="Du H."/>
            <person name="Sun H."/>
            <person name="Edwards J."/>
            <person name="Bradshaw-Cordum H."/>
            <person name="Ali J."/>
            <person name="Andrews S."/>
            <person name="Isak A."/>
            <person name="Vanbrunt A."/>
            <person name="Nguyen C."/>
            <person name="Du F."/>
            <person name="Lamar B."/>
            <person name="Courtney L."/>
            <person name="Kalicki J."/>
            <person name="Ozersky P."/>
            <person name="Bielicki L."/>
            <person name="Scott K."/>
            <person name="Holmes A."/>
            <person name="Harkins R."/>
            <person name="Harris A."/>
            <person name="Strong C.M."/>
            <person name="Hou S."/>
            <person name="Tomlinson C."/>
            <person name="Dauphin-Kohlberg S."/>
            <person name="Kozlowicz-Reilly A."/>
            <person name="Leonard S."/>
            <person name="Rohlfing T."/>
            <person name="Rock S.M."/>
            <person name="Tin-Wollam A.-M."/>
            <person name="Abbott A."/>
            <person name="Minx P."/>
            <person name="Maupin R."/>
            <person name="Strowmatt C."/>
            <person name="Latreille P."/>
            <person name="Miller N."/>
            <person name="Johnson D."/>
            <person name="Murray J."/>
            <person name="Woessner J.P."/>
            <person name="Wendl M.C."/>
            <person name="Yang S.-P."/>
            <person name="Schultz B.R."/>
            <person name="Wallis J.W."/>
            <person name="Spieth J."/>
            <person name="Bieri T.A."/>
            <person name="Nelson J.O."/>
            <person name="Berkowicz N."/>
            <person name="Wohldmann P.E."/>
            <person name="Cook L.L."/>
            <person name="Hickenbotham M.T."/>
            <person name="Eldred J."/>
            <person name="Williams D."/>
            <person name="Bedell J.A."/>
            <person name="Mardis E.R."/>
            <person name="Clifton S.W."/>
            <person name="Chissoe S.L."/>
            <person name="Marra M.A."/>
            <person name="Raymond C."/>
            <person name="Haugen E."/>
            <person name="Gillett W."/>
            <person name="Zhou Y."/>
            <person name="James R."/>
            <person name="Phelps K."/>
            <person name="Iadanoto S."/>
            <person name="Bubb K."/>
            <person name="Simms E."/>
            <person name="Levy R."/>
            <person name="Clendenning J."/>
            <person name="Kaul R."/>
            <person name="Kent W.J."/>
            <person name="Furey T.S."/>
            <person name="Baertsch R.A."/>
            <person name="Brent M.R."/>
            <person name="Keibler E."/>
            <person name="Flicek P."/>
            <person name="Bork P."/>
            <person name="Suyama M."/>
            <person name="Bailey J.A."/>
            <person name="Portnoy M.E."/>
            <person name="Torrents D."/>
            <person name="Chinwalla A.T."/>
            <person name="Gish W.R."/>
            <person name="Eddy S.R."/>
            <person name="McPherson J.D."/>
            <person name="Olson M.V."/>
            <person name="Eichler E.E."/>
            <person name="Green E.D."/>
            <person name="Waterston R.H."/>
            <person name="Wilson R.K."/>
        </authorList>
    </citation>
    <scope>NUCLEOTIDE SEQUENCE [LARGE SCALE GENOMIC DNA]</scope>
</reference>
<reference key="3">
    <citation type="submission" date="2005-09" db="EMBL/GenBank/DDBJ databases">
        <authorList>
            <person name="Mural R.J."/>
            <person name="Istrail S."/>
            <person name="Sutton G."/>
            <person name="Florea L."/>
            <person name="Halpern A.L."/>
            <person name="Mobarry C.M."/>
            <person name="Lippert R."/>
            <person name="Walenz B."/>
            <person name="Shatkay H."/>
            <person name="Dew I."/>
            <person name="Miller J.R."/>
            <person name="Flanigan M.J."/>
            <person name="Edwards N.J."/>
            <person name="Bolanos R."/>
            <person name="Fasulo D."/>
            <person name="Halldorsson B.V."/>
            <person name="Hannenhalli S."/>
            <person name="Turner R."/>
            <person name="Yooseph S."/>
            <person name="Lu F."/>
            <person name="Nusskern D.R."/>
            <person name="Shue B.C."/>
            <person name="Zheng X.H."/>
            <person name="Zhong F."/>
            <person name="Delcher A.L."/>
            <person name="Huson D.H."/>
            <person name="Kravitz S.A."/>
            <person name="Mouchard L."/>
            <person name="Reinert K."/>
            <person name="Remington K.A."/>
            <person name="Clark A.G."/>
            <person name="Waterman M.S."/>
            <person name="Eichler E.E."/>
            <person name="Adams M.D."/>
            <person name="Hunkapiller M.W."/>
            <person name="Myers E.W."/>
            <person name="Venter J.C."/>
        </authorList>
    </citation>
    <scope>NUCLEOTIDE SEQUENCE [LARGE SCALE GENOMIC DNA]</scope>
</reference>
<reference key="4">
    <citation type="journal article" date="2004" name="Genome Res.">
        <title>The status, quality, and expansion of the NIH full-length cDNA project: the Mammalian Gene Collection (MGC).</title>
        <authorList>
            <consortium name="The MGC Project Team"/>
        </authorList>
    </citation>
    <scope>NUCLEOTIDE SEQUENCE [LARGE SCALE MRNA] (ISOFORMS 1 AND 2)</scope>
    <source>
        <tissue>Brain</tissue>
        <tissue>Placenta</tissue>
    </source>
</reference>
<reference key="5">
    <citation type="journal article" date="2006" name="Cell">
        <title>Global, in vivo, and site-specific phosphorylation dynamics in signaling networks.</title>
        <authorList>
            <person name="Olsen J.V."/>
            <person name="Blagoev B."/>
            <person name="Gnad F."/>
            <person name="Macek B."/>
            <person name="Kumar C."/>
            <person name="Mortensen P."/>
            <person name="Mann M."/>
        </authorList>
    </citation>
    <scope>IDENTIFICATION BY MASS SPECTROMETRY [LARGE SCALE ANALYSIS]</scope>
    <source>
        <tissue>Cervix carcinoma</tissue>
    </source>
</reference>
<reference key="6">
    <citation type="journal article" date="2008" name="Proc. Natl. Acad. Sci. U.S.A.">
        <title>A quantitative atlas of mitotic phosphorylation.</title>
        <authorList>
            <person name="Dephoure N."/>
            <person name="Zhou C."/>
            <person name="Villen J."/>
            <person name="Beausoleil S.A."/>
            <person name="Bakalarski C.E."/>
            <person name="Elledge S.J."/>
            <person name="Gygi S.P."/>
        </authorList>
    </citation>
    <scope>PHOSPHORYLATION [LARGE SCALE ANALYSIS] AT SER-50</scope>
    <scope>IDENTIFICATION BY MASS SPECTROMETRY [LARGE SCALE ANALYSIS]</scope>
    <source>
        <tissue>Cervix carcinoma</tissue>
    </source>
</reference>
<reference key="7">
    <citation type="journal article" date="2010" name="Sci. Signal.">
        <title>Quantitative phosphoproteomics reveals widespread full phosphorylation site occupancy during mitosis.</title>
        <authorList>
            <person name="Olsen J.V."/>
            <person name="Vermeulen M."/>
            <person name="Santamaria A."/>
            <person name="Kumar C."/>
            <person name="Miller M.L."/>
            <person name="Jensen L.J."/>
            <person name="Gnad F."/>
            <person name="Cox J."/>
            <person name="Jensen T.S."/>
            <person name="Nigg E.A."/>
            <person name="Brunak S."/>
            <person name="Mann M."/>
        </authorList>
    </citation>
    <scope>PHOSPHORYLATION [LARGE SCALE ANALYSIS] AT SER-50</scope>
    <scope>IDENTIFICATION BY MASS SPECTROMETRY [LARGE SCALE ANALYSIS]</scope>
    <source>
        <tissue>Cervix carcinoma</tissue>
    </source>
</reference>
<reference key="8">
    <citation type="journal article" date="2011" name="BMC Syst. Biol.">
        <title>Initial characterization of the human central proteome.</title>
        <authorList>
            <person name="Burkard T.R."/>
            <person name="Planyavsky M."/>
            <person name="Kaupe I."/>
            <person name="Breitwieser F.P."/>
            <person name="Buerckstuemmer T."/>
            <person name="Bennett K.L."/>
            <person name="Superti-Furga G."/>
            <person name="Colinge J."/>
        </authorList>
    </citation>
    <scope>IDENTIFICATION BY MASS SPECTROMETRY [LARGE SCALE ANALYSIS]</scope>
</reference>
<reference key="9">
    <citation type="journal article" date="2011" name="Sci. Signal.">
        <title>System-wide temporal characterization of the proteome and phosphoproteome of human embryonic stem cell differentiation.</title>
        <authorList>
            <person name="Rigbolt K.T."/>
            <person name="Prokhorova T.A."/>
            <person name="Akimov V."/>
            <person name="Henningsen J."/>
            <person name="Johansen P.T."/>
            <person name="Kratchmarova I."/>
            <person name="Kassem M."/>
            <person name="Mann M."/>
            <person name="Olsen J.V."/>
            <person name="Blagoev B."/>
        </authorList>
    </citation>
    <scope>PHOSPHORYLATION [LARGE SCALE ANALYSIS] AT SER-50</scope>
    <scope>IDENTIFICATION BY MASS SPECTROMETRY [LARGE SCALE ANALYSIS]</scope>
</reference>
<reference key="10">
    <citation type="journal article" date="2013" name="J. Proteome Res.">
        <title>Toward a comprehensive characterization of a human cancer cell phosphoproteome.</title>
        <authorList>
            <person name="Zhou H."/>
            <person name="Di Palma S."/>
            <person name="Preisinger C."/>
            <person name="Peng M."/>
            <person name="Polat A.N."/>
            <person name="Heck A.J."/>
            <person name="Mohammed S."/>
        </authorList>
    </citation>
    <scope>PHOSPHORYLATION [LARGE SCALE ANALYSIS] AT SER-50</scope>
    <scope>IDENTIFICATION BY MASS SPECTROMETRY [LARGE SCALE ANALYSIS]</scope>
    <source>
        <tissue>Cervix carcinoma</tissue>
        <tissue>Erythroleukemia</tissue>
    </source>
</reference>
<reference key="11">
    <citation type="journal article" date="2014" name="J. Proteomics">
        <title>An enzyme assisted RP-RPLC approach for in-depth analysis of human liver phosphoproteome.</title>
        <authorList>
            <person name="Bian Y."/>
            <person name="Song C."/>
            <person name="Cheng K."/>
            <person name="Dong M."/>
            <person name="Wang F."/>
            <person name="Huang J."/>
            <person name="Sun D."/>
            <person name="Wang L."/>
            <person name="Ye M."/>
            <person name="Zou H."/>
        </authorList>
    </citation>
    <scope>PHOSPHORYLATION [LARGE SCALE ANALYSIS] AT SER-50</scope>
    <scope>IDENTIFICATION BY MASS SPECTROMETRY [LARGE SCALE ANALYSIS]</scope>
    <source>
        <tissue>Liver</tissue>
    </source>
</reference>
<reference key="12">
    <citation type="journal article" date="2015" name="Proteomics">
        <title>N-terminome analysis of the human mitochondrial proteome.</title>
        <authorList>
            <person name="Vaca Jacome A.S."/>
            <person name="Rabilloud T."/>
            <person name="Schaeffer-Reiss C."/>
            <person name="Rompais M."/>
            <person name="Ayoub D."/>
            <person name="Lane L."/>
            <person name="Bairoch A."/>
            <person name="Van Dorsselaer A."/>
            <person name="Carapito C."/>
        </authorList>
    </citation>
    <scope>IDENTIFICATION BY MASS SPECTROMETRY [LARGE SCALE ANALYSIS]</scope>
</reference>
<reference key="13">
    <citation type="journal article" date="2021" name="EMBO Mol. Med.">
        <title>BET1 variants establish impaired vesicular transport as a cause for muscular dystrophy with epilepsy.</title>
        <authorList>
            <person name="Donkervoort S."/>
            <person name="Krause N."/>
            <person name="Dergai M."/>
            <person name="Yun P."/>
            <person name="Koliwer J."/>
            <person name="Gorokhova S."/>
            <person name="Geist Hauserman J."/>
            <person name="Cummings B.B."/>
            <person name="Hu Y."/>
            <person name="Smith R."/>
            <person name="Uapinyoying P."/>
            <person name="Ganesh V.S."/>
            <person name="Ghosh P.S."/>
            <person name="Monaghan K.G."/>
            <person name="Edassery S.L."/>
            <person name="Ferle P.E."/>
            <person name="Silverstein S."/>
            <person name="Chao K.R."/>
            <person name="Snyder M."/>
            <person name="Ellingwood S."/>
            <person name="Bharucha-Goebel D."/>
            <person name="Iannaccone S.T."/>
            <person name="Dal Peraro M."/>
            <person name="Foley A.R."/>
            <person name="Savas J.N."/>
            <person name="Bolduc V."/>
            <person name="Fasshauer D."/>
            <person name="Boennemann C.G."/>
            <person name="Schwake M."/>
        </authorList>
    </citation>
    <scope>INVOLVEMENT IN MDRP</scope>
    <scope>VARIANTS MDRP SER-51 AND HIS-68</scope>
    <scope>CHARACTERIZATION OF VARIANTS MDRP SER-51 AND HIS-68</scope>
    <scope>FUNCTION</scope>
    <scope>INTERACTION WITH GOSR2; LMAN1; SEC22B AND STX5</scope>
    <scope>SUBCELLULAR LOCATION</scope>
    <scope>TISSUE SPECIFICITY</scope>
</reference>
<keyword id="KW-0002">3D-structure</keyword>
<keyword id="KW-0025">Alternative splicing</keyword>
<keyword id="KW-0175">Coiled coil</keyword>
<keyword id="KW-0912">Congenital muscular dystrophy</keyword>
<keyword id="KW-0256">Endoplasmic reticulum</keyword>
<keyword id="KW-0931">ER-Golgi transport</keyword>
<keyword id="KW-0333">Golgi apparatus</keyword>
<keyword id="KW-0472">Membrane</keyword>
<keyword id="KW-0597">Phosphoprotein</keyword>
<keyword id="KW-0653">Protein transport</keyword>
<keyword id="KW-1267">Proteomics identification</keyword>
<keyword id="KW-1185">Reference proteome</keyword>
<keyword id="KW-0812">Transmembrane</keyword>
<keyword id="KW-1133">Transmembrane helix</keyword>
<keyword id="KW-0813">Transport</keyword>